<proteinExistence type="evidence at protein level"/>
<comment type="function">
    <text evidence="1">May be involved in the control of adherens junction integrity.</text>
</comment>
<comment type="subcellular location">
    <subcellularLocation>
        <location evidence="1">Apical cell membrane</location>
    </subcellularLocation>
    <subcellularLocation>
        <location evidence="1">Cell projection</location>
        <location evidence="1">Cilium</location>
    </subcellularLocation>
    <subcellularLocation>
        <location evidence="1">Cell junction</location>
        <location evidence="1">Adherens junction</location>
    </subcellularLocation>
</comment>
<organism>
    <name type="scientific">Homo sapiens</name>
    <name type="common">Human</name>
    <dbReference type="NCBI Taxonomy" id="9606"/>
    <lineage>
        <taxon>Eukaryota</taxon>
        <taxon>Metazoa</taxon>
        <taxon>Chordata</taxon>
        <taxon>Craniata</taxon>
        <taxon>Vertebrata</taxon>
        <taxon>Euteleostomi</taxon>
        <taxon>Mammalia</taxon>
        <taxon>Eutheria</taxon>
        <taxon>Euarchontoglires</taxon>
        <taxon>Primates</taxon>
        <taxon>Haplorrhini</taxon>
        <taxon>Catarrhini</taxon>
        <taxon>Hominidae</taxon>
        <taxon>Homo</taxon>
    </lineage>
</organism>
<accession>C9J069</accession>
<reference key="1">
    <citation type="journal article" date="2004" name="Nature">
        <title>DNA sequence and analysis of human chromosome 9.</title>
        <authorList>
            <person name="Humphray S.J."/>
            <person name="Oliver K."/>
            <person name="Hunt A.R."/>
            <person name="Plumb R.W."/>
            <person name="Loveland J.E."/>
            <person name="Howe K.L."/>
            <person name="Andrews T.D."/>
            <person name="Searle S."/>
            <person name="Hunt S.E."/>
            <person name="Scott C.E."/>
            <person name="Jones M.C."/>
            <person name="Ainscough R."/>
            <person name="Almeida J.P."/>
            <person name="Ambrose K.D."/>
            <person name="Ashwell R.I.S."/>
            <person name="Babbage A.K."/>
            <person name="Babbage S."/>
            <person name="Bagguley C.L."/>
            <person name="Bailey J."/>
            <person name="Banerjee R."/>
            <person name="Barker D.J."/>
            <person name="Barlow K.F."/>
            <person name="Bates K."/>
            <person name="Beasley H."/>
            <person name="Beasley O."/>
            <person name="Bird C.P."/>
            <person name="Bray-Allen S."/>
            <person name="Brown A.J."/>
            <person name="Brown J.Y."/>
            <person name="Burford D."/>
            <person name="Burrill W."/>
            <person name="Burton J."/>
            <person name="Carder C."/>
            <person name="Carter N.P."/>
            <person name="Chapman J.C."/>
            <person name="Chen Y."/>
            <person name="Clarke G."/>
            <person name="Clark S.Y."/>
            <person name="Clee C.M."/>
            <person name="Clegg S."/>
            <person name="Collier R.E."/>
            <person name="Corby N."/>
            <person name="Crosier M."/>
            <person name="Cummings A.T."/>
            <person name="Davies J."/>
            <person name="Dhami P."/>
            <person name="Dunn M."/>
            <person name="Dutta I."/>
            <person name="Dyer L.W."/>
            <person name="Earthrowl M.E."/>
            <person name="Faulkner L."/>
            <person name="Fleming C.J."/>
            <person name="Frankish A."/>
            <person name="Frankland J.A."/>
            <person name="French L."/>
            <person name="Fricker D.G."/>
            <person name="Garner P."/>
            <person name="Garnett J."/>
            <person name="Ghori J."/>
            <person name="Gilbert J.G.R."/>
            <person name="Glison C."/>
            <person name="Grafham D.V."/>
            <person name="Gribble S."/>
            <person name="Griffiths C."/>
            <person name="Griffiths-Jones S."/>
            <person name="Grocock R."/>
            <person name="Guy J."/>
            <person name="Hall R.E."/>
            <person name="Hammond S."/>
            <person name="Harley J.L."/>
            <person name="Harrison E.S.I."/>
            <person name="Hart E.A."/>
            <person name="Heath P.D."/>
            <person name="Henderson C.D."/>
            <person name="Hopkins B.L."/>
            <person name="Howard P.J."/>
            <person name="Howden P.J."/>
            <person name="Huckle E."/>
            <person name="Johnson C."/>
            <person name="Johnson D."/>
            <person name="Joy A.A."/>
            <person name="Kay M."/>
            <person name="Keenan S."/>
            <person name="Kershaw J.K."/>
            <person name="Kimberley A.M."/>
            <person name="King A."/>
            <person name="Knights A."/>
            <person name="Laird G.K."/>
            <person name="Langford C."/>
            <person name="Lawlor S."/>
            <person name="Leongamornlert D.A."/>
            <person name="Leversha M."/>
            <person name="Lloyd C."/>
            <person name="Lloyd D.M."/>
            <person name="Lovell J."/>
            <person name="Martin S."/>
            <person name="Mashreghi-Mohammadi M."/>
            <person name="Matthews L."/>
            <person name="McLaren S."/>
            <person name="McLay K.E."/>
            <person name="McMurray A."/>
            <person name="Milne S."/>
            <person name="Nickerson T."/>
            <person name="Nisbett J."/>
            <person name="Nordsiek G."/>
            <person name="Pearce A.V."/>
            <person name="Peck A.I."/>
            <person name="Porter K.M."/>
            <person name="Pandian R."/>
            <person name="Pelan S."/>
            <person name="Phillimore B."/>
            <person name="Povey S."/>
            <person name="Ramsey Y."/>
            <person name="Rand V."/>
            <person name="Scharfe M."/>
            <person name="Sehra H.K."/>
            <person name="Shownkeen R."/>
            <person name="Sims S.K."/>
            <person name="Skuce C.D."/>
            <person name="Smith M."/>
            <person name="Steward C.A."/>
            <person name="Swarbreck D."/>
            <person name="Sycamore N."/>
            <person name="Tester J."/>
            <person name="Thorpe A."/>
            <person name="Tracey A."/>
            <person name="Tromans A."/>
            <person name="Thomas D.W."/>
            <person name="Wall M."/>
            <person name="Wallis J.M."/>
            <person name="West A.P."/>
            <person name="Whitehead S.L."/>
            <person name="Willey D.L."/>
            <person name="Williams S.A."/>
            <person name="Wilming L."/>
            <person name="Wray P.W."/>
            <person name="Young L."/>
            <person name="Ashurst J.L."/>
            <person name="Coulson A."/>
            <person name="Blocker H."/>
            <person name="Durbin R.M."/>
            <person name="Sulston J.E."/>
            <person name="Hubbard T."/>
            <person name="Jackson M.J."/>
            <person name="Bentley D.R."/>
            <person name="Beck S."/>
            <person name="Rogers J."/>
            <person name="Dunham I."/>
        </authorList>
    </citation>
    <scope>NUCLEOTIDE SEQUENCE [LARGE SCALE GENOMIC DNA]</scope>
</reference>
<name>AJM1_HUMAN</name>
<evidence type="ECO:0000250" key="1">
    <source>
        <dbReference type="UniProtKB" id="A0A1C3NSL9"/>
    </source>
</evidence>
<evidence type="ECO:0000250" key="2">
    <source>
        <dbReference type="UniProtKB" id="A2AJA9"/>
    </source>
</evidence>
<evidence type="ECO:0000256" key="3">
    <source>
        <dbReference type="SAM" id="MobiDB-lite"/>
    </source>
</evidence>
<evidence type="ECO:0000305" key="4"/>
<evidence type="ECO:0000312" key="5">
    <source>
        <dbReference type="HGNC" id="HGNC:37284"/>
    </source>
</evidence>
<feature type="chain" id="PRO_0000392544" description="Apical junction component 1 homolog">
    <location>
        <begin position="1"/>
        <end position="976"/>
    </location>
</feature>
<feature type="region of interest" description="Disordered" evidence="3">
    <location>
        <begin position="21"/>
        <end position="49"/>
    </location>
</feature>
<feature type="region of interest" description="Disordered" evidence="3">
    <location>
        <begin position="61"/>
        <end position="136"/>
    </location>
</feature>
<feature type="region of interest" description="Disordered" evidence="3">
    <location>
        <begin position="220"/>
        <end position="242"/>
    </location>
</feature>
<feature type="region of interest" description="Disordered" evidence="3">
    <location>
        <begin position="264"/>
        <end position="294"/>
    </location>
</feature>
<feature type="region of interest" description="Disordered" evidence="3">
    <location>
        <begin position="412"/>
        <end position="443"/>
    </location>
</feature>
<feature type="region of interest" description="Disordered" evidence="3">
    <location>
        <begin position="539"/>
        <end position="574"/>
    </location>
</feature>
<feature type="region of interest" description="Disordered" evidence="3">
    <location>
        <begin position="614"/>
        <end position="660"/>
    </location>
</feature>
<feature type="region of interest" description="Disordered" evidence="3">
    <location>
        <begin position="855"/>
        <end position="888"/>
    </location>
</feature>
<feature type="compositionally biased region" description="Pro residues" evidence="3">
    <location>
        <begin position="98"/>
        <end position="113"/>
    </location>
</feature>
<feature type="compositionally biased region" description="Basic and acidic residues" evidence="3">
    <location>
        <begin position="116"/>
        <end position="134"/>
    </location>
</feature>
<feature type="compositionally biased region" description="Low complexity" evidence="3">
    <location>
        <begin position="616"/>
        <end position="625"/>
    </location>
</feature>
<feature type="compositionally biased region" description="Low complexity" evidence="3">
    <location>
        <begin position="633"/>
        <end position="655"/>
    </location>
</feature>
<feature type="modified residue" description="Phosphoserine" evidence="2">
    <location>
        <position position="52"/>
    </location>
</feature>
<feature type="modified residue" description="Phosphoserine" evidence="2">
    <location>
        <position position="129"/>
    </location>
</feature>
<feature type="modified residue" description="Omega-N-methylarginine" evidence="2">
    <location>
        <position position="322"/>
    </location>
</feature>
<feature type="modified residue" description="Phosphoserine" evidence="2">
    <location>
        <position position="468"/>
    </location>
</feature>
<feature type="modified residue" description="Phosphoserine" evidence="2">
    <location>
        <position position="509"/>
    </location>
</feature>
<feature type="modified residue" description="Phosphoserine" evidence="2">
    <location>
        <position position="512"/>
    </location>
</feature>
<feature type="modified residue" description="Asymmetric dimethylarginine; alternate" evidence="2">
    <location>
        <position position="749"/>
    </location>
</feature>
<feature type="modified residue" description="Omega-N-methylarginine; alternate" evidence="2">
    <location>
        <position position="749"/>
    </location>
</feature>
<sequence>MTRTDPPDLLVSTVYQDIKVATPGPASKCSPCERSVARPAEPAPFNKRHCRSFDFLEALDGPAMETLPEPPPPESAVPRARTREAEPRRRARSKSAPRAPPGLTPAPASPPVLPRRGREAQRAARAEASPRREPAYPALRALANELHPIKLQPQRGGPGRVAPLCAAAGRCAPPEPPAGPAPHVRCRLDIKPDDAVLQHATRGSRSCGPTEAAHWARPAPQFHGLTVPGPRHMALSRTPTPSDSYCADPRAFYCDGPLPGPRDYAERRSLPFTTPPGPTQFFYTEEPQGFRGSFAASPGPTFDAYYPRPYPSEELSGPSPRRMGGYYAGEVRTFPIQEPPSRSYYGEAPRAYGLPYGPRYVPEEPRAHSTARPFYTEDFGRYRERDVLARTYPHPRSSPAWADWGPRPYRTLQVVPPSDPDPLLASWHGGTGTSPPRLATDSRHYSRSWDNILAPGPRREDPLGRGRSYENLLGREVREPRGVSPEGRRPPVVVNLSTSPRRYAALSLSETSLTEKGRAGEGLGRNWYVTPEITITDNDLRATERPSARAWELPGGRTRPPPHAAPDGPTSGRQRSLEQLDELITDLVIDSRPTAGQASEPAADCLGPQLRRLLDSRPAGSGAPALAPPRSPPASAGSAEEPAAPGEAADASPEPSADEDDLMTCSNARCRRTETMFNACLYFKSCHSCYTYYCSRLCRREDWDAHKARCVYGRVGSVCRHVLQFCRDSGPVHRAFSRIARVGFLSRGRGVLFLGFPSPGSADNFLRFGLEGLLLSPTYLSLRELATHAAPLGSYARELAAAGRLYEPAECFLLSVSVAVGPGTAPPGTPALPAPAPRSHGPTVRKFAKVALAAGSPARPPPARSREPDMETLILTPPPGTAGLDQDGEAGRRAREVAFIHIQRELRLRGVFLRHEFPRVYEQLCEFVEANRRFTPTTIYPTDRRTGRPFMCMIMAASEPRALDWVASANLLDDIM</sequence>
<keyword id="KW-0965">Cell junction</keyword>
<keyword id="KW-1003">Cell membrane</keyword>
<keyword id="KW-0966">Cell projection</keyword>
<keyword id="KW-0472">Membrane</keyword>
<keyword id="KW-0488">Methylation</keyword>
<keyword id="KW-0597">Phosphoprotein</keyword>
<keyword id="KW-1267">Proteomics identification</keyword>
<keyword id="KW-1185">Reference proteome</keyword>
<protein>
    <recommendedName>
        <fullName evidence="4">Apical junction component 1 homolog</fullName>
    </recommendedName>
</protein>
<dbReference type="EMBL" id="AL355987">
    <property type="status" value="NOT_ANNOTATED_CDS"/>
    <property type="molecule type" value="Genomic_DNA"/>
</dbReference>
<dbReference type="CCDS" id="CCDS48059.1"/>
<dbReference type="RefSeq" id="NP_001073951.2">
    <property type="nucleotide sequence ID" value="NM_001080482.5"/>
</dbReference>
<dbReference type="BioGRID" id="133280">
    <property type="interactions" value="2"/>
</dbReference>
<dbReference type="FunCoup" id="C9J069">
    <property type="interactions" value="58"/>
</dbReference>
<dbReference type="STRING" id="9606.ENSP00000412388"/>
<dbReference type="GlyGen" id="C9J069">
    <property type="glycosylation" value="7 sites, 1 O-linked glycan (2 sites)"/>
</dbReference>
<dbReference type="iPTMnet" id="C9J069"/>
<dbReference type="PhosphoSitePlus" id="C9J069"/>
<dbReference type="SwissPalm" id="C9J069"/>
<dbReference type="BioMuta" id="C9orf172"/>
<dbReference type="jPOST" id="C9J069"/>
<dbReference type="MassIVE" id="C9J069"/>
<dbReference type="PaxDb" id="9606-ENSP00000412388"/>
<dbReference type="PeptideAtlas" id="C9J069"/>
<dbReference type="ProteomicsDB" id="7898"/>
<dbReference type="Antibodypedia" id="32260">
    <property type="antibodies" value="44 antibodies from 9 providers"/>
</dbReference>
<dbReference type="DNASU" id="389813"/>
<dbReference type="Ensembl" id="ENST00000436881.3">
    <property type="protein sequence ID" value="ENSP00000412388.1"/>
    <property type="gene ID" value="ENSG00000232434.3"/>
</dbReference>
<dbReference type="GeneID" id="389813"/>
<dbReference type="KEGG" id="hsa:389813"/>
<dbReference type="MANE-Select" id="ENST00000436881.3">
    <property type="protein sequence ID" value="ENSP00000412388.1"/>
    <property type="RefSeq nucleotide sequence ID" value="NM_001080482.5"/>
    <property type="RefSeq protein sequence ID" value="NP_001073951.2"/>
</dbReference>
<dbReference type="UCSC" id="uc011meh.3">
    <property type="organism name" value="human"/>
</dbReference>
<dbReference type="AGR" id="HGNC:37284"/>
<dbReference type="CTD" id="389813"/>
<dbReference type="GeneCards" id="AJM1"/>
<dbReference type="HGNC" id="HGNC:37284">
    <property type="gene designation" value="AJM1"/>
</dbReference>
<dbReference type="HPA" id="ENSG00000232434">
    <property type="expression patterns" value="Tissue enhanced (brain)"/>
</dbReference>
<dbReference type="neXtProt" id="NX_C9J069"/>
<dbReference type="OpenTargets" id="ENSG00000232434"/>
<dbReference type="PharmGKB" id="PA165585544"/>
<dbReference type="VEuPathDB" id="HostDB:ENSG00000232434"/>
<dbReference type="eggNOG" id="ENOG502QQYV">
    <property type="taxonomic scope" value="Eukaryota"/>
</dbReference>
<dbReference type="GeneTree" id="ENSGT00390000016543"/>
<dbReference type="HOGENOM" id="CLU_012765_0_0_1"/>
<dbReference type="InParanoid" id="C9J069"/>
<dbReference type="OMA" id="KEKTHDN"/>
<dbReference type="OrthoDB" id="6431454at2759"/>
<dbReference type="PAN-GO" id="C9J069">
    <property type="GO annotations" value="3 GO annotations based on evolutionary models"/>
</dbReference>
<dbReference type="PhylomeDB" id="C9J069"/>
<dbReference type="TreeFam" id="TF323946"/>
<dbReference type="PathwayCommons" id="C9J069"/>
<dbReference type="SignaLink" id="C9J069"/>
<dbReference type="BioGRID-ORCS" id="389813">
    <property type="hits" value="19 hits in 1058 CRISPR screens"/>
</dbReference>
<dbReference type="ChiTaRS" id="C9orf172">
    <property type="organism name" value="human"/>
</dbReference>
<dbReference type="GenomeRNAi" id="389813"/>
<dbReference type="Pharos" id="C9J069">
    <property type="development level" value="Tdark"/>
</dbReference>
<dbReference type="PRO" id="PR:C9J069"/>
<dbReference type="Proteomes" id="UP000005640">
    <property type="component" value="Chromosome 9"/>
</dbReference>
<dbReference type="RNAct" id="C9J069">
    <property type="molecule type" value="protein"/>
</dbReference>
<dbReference type="Bgee" id="ENSG00000232434">
    <property type="expression patterns" value="Expressed in right hemisphere of cerebellum and 94 other cell types or tissues"/>
</dbReference>
<dbReference type="GO" id="GO:0005912">
    <property type="term" value="C:adherens junction"/>
    <property type="evidence" value="ECO:0007669"/>
    <property type="project" value="UniProtKB-SubCell"/>
</dbReference>
<dbReference type="GO" id="GO:0043296">
    <property type="term" value="C:apical junction complex"/>
    <property type="evidence" value="ECO:0000318"/>
    <property type="project" value="GO_Central"/>
</dbReference>
<dbReference type="GO" id="GO:0016324">
    <property type="term" value="C:apical plasma membrane"/>
    <property type="evidence" value="ECO:0007669"/>
    <property type="project" value="UniProtKB-SubCell"/>
</dbReference>
<dbReference type="GO" id="GO:0005929">
    <property type="term" value="C:cilium"/>
    <property type="evidence" value="ECO:0007669"/>
    <property type="project" value="UniProtKB-SubCell"/>
</dbReference>
<dbReference type="GO" id="GO:0005886">
    <property type="term" value="C:plasma membrane"/>
    <property type="evidence" value="ECO:0000318"/>
    <property type="project" value="GO_Central"/>
</dbReference>
<dbReference type="GO" id="GO:0045216">
    <property type="term" value="P:cell-cell junction organization"/>
    <property type="evidence" value="ECO:0000318"/>
    <property type="project" value="GO_Central"/>
</dbReference>
<dbReference type="InterPro" id="IPR038825">
    <property type="entry name" value="Apical_junction"/>
</dbReference>
<dbReference type="PANTHER" id="PTHR21517">
    <property type="entry name" value="APICAL JUNCTION COMPONENT 1 HOMOLOG"/>
    <property type="match status" value="1"/>
</dbReference>
<dbReference type="PANTHER" id="PTHR21517:SF3">
    <property type="entry name" value="APICAL JUNCTION COMPONENT 1 HOMOLOG"/>
    <property type="match status" value="1"/>
</dbReference>
<gene>
    <name evidence="5" type="primary">AJM1</name>
    <name type="synonym">C9orf172</name>
</gene>